<geneLocation type="plasmid">
    <name>sym pNGR234a</name>
</geneLocation>
<name>Y4OD_SINFN</name>
<protein>
    <recommendedName>
        <fullName>Uncharacterized protein y4oD</fullName>
    </recommendedName>
</protein>
<sequence>MSADQTAIADMDDIKLRLGFINGQGQQKGVDSLIVTDLIELARQRAISEVVLLSGDEDVRVGVQIAQNYGVRVHLLGIHPARGSQSPTLRQEADTTSEWDKLTVEKFLSLRSVHQPAMTAIAASPAKAAVPAAETADDDNGLIIAAACSFVADLQEADLQAIKIFWKDNRGVPPEFDGRLLAQTAEKISRRLEKAEMRVLRSRFREEVTKRREG</sequence>
<feature type="chain" id="PRO_0000200925" description="Uncharacterized protein y4oD">
    <location>
        <begin position="1"/>
        <end position="214"/>
    </location>
</feature>
<dbReference type="EMBL" id="U00090">
    <property type="protein sequence ID" value="AAB91797.1"/>
    <property type="molecule type" value="Genomic_DNA"/>
</dbReference>
<dbReference type="RefSeq" id="NP_444000.1">
    <property type="nucleotide sequence ID" value="NC_000914.2"/>
</dbReference>
<dbReference type="RefSeq" id="WP_010875252.1">
    <property type="nucleotide sequence ID" value="NC_000914.2"/>
</dbReference>
<dbReference type="SMR" id="P55589"/>
<dbReference type="KEGG" id="rhi:NGR_a02250"/>
<dbReference type="eggNOG" id="COG1432">
    <property type="taxonomic scope" value="Bacteria"/>
</dbReference>
<dbReference type="HOGENOM" id="CLU_1288025_0_0_5"/>
<dbReference type="OrthoDB" id="9800236at2"/>
<dbReference type="Proteomes" id="UP000001054">
    <property type="component" value="Plasmid pNGR234a"/>
</dbReference>
<dbReference type="GO" id="GO:0004540">
    <property type="term" value="F:RNA nuclease activity"/>
    <property type="evidence" value="ECO:0007669"/>
    <property type="project" value="InterPro"/>
</dbReference>
<dbReference type="Gene3D" id="3.40.50.1010">
    <property type="entry name" value="5'-nuclease"/>
    <property type="match status" value="1"/>
</dbReference>
<dbReference type="InterPro" id="IPR021139">
    <property type="entry name" value="NYN"/>
</dbReference>
<dbReference type="Pfam" id="PF01936">
    <property type="entry name" value="NYN"/>
    <property type="match status" value="1"/>
</dbReference>
<keyword id="KW-0614">Plasmid</keyword>
<keyword id="KW-1185">Reference proteome</keyword>
<accession>P55589</accession>
<reference key="1">
    <citation type="journal article" date="1997" name="Nature">
        <title>Molecular basis of symbiosis between Rhizobium and legumes.</title>
        <authorList>
            <person name="Freiberg C.A."/>
            <person name="Fellay R."/>
            <person name="Bairoch A."/>
            <person name="Broughton W.J."/>
            <person name="Rosenthal A."/>
            <person name="Perret X."/>
        </authorList>
    </citation>
    <scope>NUCLEOTIDE SEQUENCE [LARGE SCALE GENOMIC DNA]</scope>
    <source>
        <strain>NBRC 101917 / NGR234</strain>
    </source>
</reference>
<reference key="2">
    <citation type="journal article" date="2009" name="Appl. Environ. Microbiol.">
        <title>Rhizobium sp. strain NGR234 possesses a remarkable number of secretion systems.</title>
        <authorList>
            <person name="Schmeisser C."/>
            <person name="Liesegang H."/>
            <person name="Krysciak D."/>
            <person name="Bakkou N."/>
            <person name="Le Quere A."/>
            <person name="Wollherr A."/>
            <person name="Heinemeyer I."/>
            <person name="Morgenstern B."/>
            <person name="Pommerening-Roeser A."/>
            <person name="Flores M."/>
            <person name="Palacios R."/>
            <person name="Brenner S."/>
            <person name="Gottschalk G."/>
            <person name="Schmitz R.A."/>
            <person name="Broughton W.J."/>
            <person name="Perret X."/>
            <person name="Strittmatter A.W."/>
            <person name="Streit W.R."/>
        </authorList>
    </citation>
    <scope>NUCLEOTIDE SEQUENCE [LARGE SCALE GENOMIC DNA]</scope>
    <source>
        <strain>NBRC 101917 / NGR234</strain>
    </source>
</reference>
<gene>
    <name type="ordered locus">NGR_a02250</name>
    <name type="ORF">y4oD</name>
</gene>
<organism>
    <name type="scientific">Sinorhizobium fredii (strain NBRC 101917 / NGR234)</name>
    <dbReference type="NCBI Taxonomy" id="394"/>
    <lineage>
        <taxon>Bacteria</taxon>
        <taxon>Pseudomonadati</taxon>
        <taxon>Pseudomonadota</taxon>
        <taxon>Alphaproteobacteria</taxon>
        <taxon>Hyphomicrobiales</taxon>
        <taxon>Rhizobiaceae</taxon>
        <taxon>Sinorhizobium/Ensifer group</taxon>
        <taxon>Sinorhizobium</taxon>
    </lineage>
</organism>
<proteinExistence type="predicted"/>